<feature type="signal peptide" evidence="2">
    <location>
        <begin position="1"/>
        <end position="41"/>
    </location>
</feature>
<feature type="chain" id="PRO_0000439369" description="Thyrostimulin alpha-2 subunit" evidence="1 6">
    <location>
        <begin position="42"/>
        <end position="144"/>
    </location>
</feature>
<feature type="disulfide bond" evidence="3">
    <location>
        <begin position="52"/>
        <end position="107"/>
    </location>
</feature>
<feature type="disulfide bond" evidence="3">
    <location>
        <begin position="66"/>
        <end position="121"/>
    </location>
</feature>
<feature type="disulfide bond" evidence="3">
    <location>
        <begin position="76"/>
        <end position="136"/>
    </location>
</feature>
<feature type="disulfide bond" evidence="3">
    <location>
        <begin position="80"/>
        <end position="138"/>
    </location>
</feature>
<accession>A0A0F7Z3J2</accession>
<dbReference type="EMBL" id="GAIH01000105">
    <property type="protein sequence ID" value="JAI08984.1"/>
    <property type="molecule type" value="mRNA"/>
</dbReference>
<dbReference type="GO" id="GO:0005615">
    <property type="term" value="C:extracellular space"/>
    <property type="evidence" value="ECO:0007669"/>
    <property type="project" value="TreeGrafter"/>
</dbReference>
<dbReference type="GO" id="GO:0005179">
    <property type="term" value="F:hormone activity"/>
    <property type="evidence" value="ECO:0007669"/>
    <property type="project" value="UniProtKB-KW"/>
</dbReference>
<dbReference type="GO" id="GO:0051427">
    <property type="term" value="F:hormone receptor binding"/>
    <property type="evidence" value="ECO:0007669"/>
    <property type="project" value="TreeGrafter"/>
</dbReference>
<dbReference type="GO" id="GO:0090729">
    <property type="term" value="F:toxin activity"/>
    <property type="evidence" value="ECO:0007669"/>
    <property type="project" value="UniProtKB-KW"/>
</dbReference>
<dbReference type="GO" id="GO:0007166">
    <property type="term" value="P:cell surface receptor signaling pathway"/>
    <property type="evidence" value="ECO:0007669"/>
    <property type="project" value="TreeGrafter"/>
</dbReference>
<dbReference type="FunFam" id="2.10.90.10:FF:000049">
    <property type="entry name" value="Glycoprotein hormone alpha 2"/>
    <property type="match status" value="1"/>
</dbReference>
<dbReference type="Gene3D" id="2.10.90.10">
    <property type="entry name" value="Cystine-knot cytokines"/>
    <property type="match status" value="1"/>
</dbReference>
<dbReference type="InterPro" id="IPR029034">
    <property type="entry name" value="Cystine-knot_cytokine"/>
</dbReference>
<dbReference type="InterPro" id="IPR052680">
    <property type="entry name" value="Glyco_Hormone_Alpha"/>
</dbReference>
<dbReference type="PANTHER" id="PTHR31129">
    <property type="entry name" value="GLYCOPROTEIN HORMONE ALPHA-2"/>
    <property type="match status" value="1"/>
</dbReference>
<dbReference type="PANTHER" id="PTHR31129:SF2">
    <property type="entry name" value="GLYCOPROTEIN HORMONE ALPHA-2"/>
    <property type="match status" value="1"/>
</dbReference>
<proteinExistence type="evidence at protein level"/>
<organism>
    <name type="scientific">Conus victoriae</name>
    <name type="common">Queen Victoria cone</name>
    <dbReference type="NCBI Taxonomy" id="319920"/>
    <lineage>
        <taxon>Eukaryota</taxon>
        <taxon>Metazoa</taxon>
        <taxon>Spiralia</taxon>
        <taxon>Lophotrochozoa</taxon>
        <taxon>Mollusca</taxon>
        <taxon>Gastropoda</taxon>
        <taxon>Caenogastropoda</taxon>
        <taxon>Neogastropoda</taxon>
        <taxon>Conoidea</taxon>
        <taxon>Conidae</taxon>
        <taxon>Conus</taxon>
        <taxon>Cylinder</taxon>
    </lineage>
</organism>
<comment type="subunit">
    <text evidence="1">Heterodimer with GPHB5; non-covalently-linked.</text>
</comment>
<comment type="subcellular location">
    <subcellularLocation>
        <location evidence="4">Secreted</location>
    </subcellularLocation>
</comment>
<comment type="tissue specificity">
    <text evidence="4">Expressed by the venom duct.</text>
</comment>
<comment type="similarity">
    <text evidence="1 6">Belongs to the glycoprotein hormones subunit alpha family.</text>
</comment>
<sequence length="144" mass="15734">MGRRDSGRAVAQRYRGVTRGVTVIACLMVVCACVGLCDATGQKRHSWEAPGCHLVGHTRVVRIPDCVPFQITTNACRGFCVSYAIPSPYQTLVYNPNHIITSRAACCDIIDTLDIPVQVTCVDGVREIVFKSARSCACSICRRE</sequence>
<name>CTHA2_CONVC</name>
<protein>
    <recommendedName>
        <fullName evidence="5">Thyrostimulin alpha-2 subunit</fullName>
    </recommendedName>
</protein>
<keyword id="KW-0903">Direct protein sequencing</keyword>
<keyword id="KW-1015">Disulfide bond</keyword>
<keyword id="KW-0372">Hormone</keyword>
<keyword id="KW-0964">Secreted</keyword>
<keyword id="KW-0732">Signal</keyword>
<keyword id="KW-0800">Toxin</keyword>
<reference key="1">
    <citation type="journal article" date="2014" name="PLoS ONE">
        <title>Diversity of conotoxin gene superfamilies in the venomous snail, Conus victoriae.</title>
        <authorList>
            <person name="Robinson S.D."/>
            <person name="Safavi-Hemami H."/>
            <person name="McIntosh L.D."/>
            <person name="Purcell A.W."/>
            <person name="Norton R.S."/>
            <person name="Papenfuss A.T."/>
        </authorList>
    </citation>
    <scope>NUCLEOTIDE SEQUENCE [MRNA]</scope>
</reference>
<reference key="2">
    <citation type="journal article" date="2017" name="Gen. Comp. Endocrinol.">
        <title>Hormone-like peptides in the venoms of marine cone snails.</title>
        <authorList>
            <person name="Robinson S.D."/>
            <person name="Li Q."/>
            <person name="Bandyopadhyay P.K."/>
            <person name="Gajewiak J."/>
            <person name="Yandell M."/>
            <person name="Papenfuss A.T."/>
            <person name="Purcell A.W."/>
            <person name="Norton R.S."/>
            <person name="Safavi-Hemami H."/>
        </authorList>
    </citation>
    <scope>NUCLEOTIDE SEQUENCE [MRNA]</scope>
    <scope>PROTEIN SEQUENCE OF 63-77 AND 104-126</scope>
    <scope>IDENTIFICATION BY MASS SPECTROMETRY</scope>
    <scope>SUBCELLULAR LOCATION</scope>
    <source>
        <tissue>Venom</tissue>
        <tissue>Venom gland</tissue>
    </source>
</reference>
<evidence type="ECO:0000250" key="1">
    <source>
        <dbReference type="UniProtKB" id="Q96T91"/>
    </source>
</evidence>
<evidence type="ECO:0000255" key="2"/>
<evidence type="ECO:0000255" key="3">
    <source>
        <dbReference type="PROSITE-ProRule" id="PRU00039"/>
    </source>
</evidence>
<evidence type="ECO:0000269" key="4">
    <source>
    </source>
</evidence>
<evidence type="ECO:0000303" key="5">
    <source>
    </source>
</evidence>
<evidence type="ECO:0000305" key="6">
    <source>
    </source>
</evidence>